<comment type="function">
    <text evidence="1">Catalyzes the formation of S-adenosylmethionine (AdoMet) from methionine and ATP. The overall synthetic reaction is composed of two sequential steps, AdoMet formation and the subsequent tripolyphosphate hydrolysis which occurs prior to release of AdoMet from the enzyme.</text>
</comment>
<comment type="catalytic activity">
    <reaction evidence="1">
        <text>L-methionine + ATP + H2O = S-adenosyl-L-methionine + phosphate + diphosphate</text>
        <dbReference type="Rhea" id="RHEA:21080"/>
        <dbReference type="ChEBI" id="CHEBI:15377"/>
        <dbReference type="ChEBI" id="CHEBI:30616"/>
        <dbReference type="ChEBI" id="CHEBI:33019"/>
        <dbReference type="ChEBI" id="CHEBI:43474"/>
        <dbReference type="ChEBI" id="CHEBI:57844"/>
        <dbReference type="ChEBI" id="CHEBI:59789"/>
        <dbReference type="EC" id="2.5.1.6"/>
    </reaction>
</comment>
<comment type="cofactor">
    <cofactor evidence="1">
        <name>Mg(2+)</name>
        <dbReference type="ChEBI" id="CHEBI:18420"/>
    </cofactor>
    <text evidence="1">Binds 2 divalent ions per subunit.</text>
</comment>
<comment type="cofactor">
    <cofactor evidence="1">
        <name>K(+)</name>
        <dbReference type="ChEBI" id="CHEBI:29103"/>
    </cofactor>
    <text evidence="1">Binds 1 potassium ion per subunit.</text>
</comment>
<comment type="pathway">
    <text evidence="1">Amino-acid biosynthesis; S-adenosyl-L-methionine biosynthesis; S-adenosyl-L-methionine from L-methionine: step 1/1.</text>
</comment>
<comment type="subunit">
    <text evidence="1">Homotetramer; dimer of dimers.</text>
</comment>
<comment type="subcellular location">
    <subcellularLocation>
        <location evidence="1">Cytoplasm</location>
    </subcellularLocation>
</comment>
<comment type="similarity">
    <text evidence="1">Belongs to the AdoMet synthase family.</text>
</comment>
<feature type="chain" id="PRO_1000093013" description="S-adenosylmethionine synthase">
    <location>
        <begin position="1"/>
        <end position="388"/>
    </location>
</feature>
<feature type="region of interest" description="Flexible loop" evidence="1">
    <location>
        <begin position="100"/>
        <end position="110"/>
    </location>
</feature>
<feature type="binding site" description="in other chain" evidence="1">
    <location>
        <position position="16"/>
    </location>
    <ligand>
        <name>ATP</name>
        <dbReference type="ChEBI" id="CHEBI:30616"/>
        <note>ligand shared between two neighboring subunits</note>
    </ligand>
</feature>
<feature type="binding site" evidence="1">
    <location>
        <position position="18"/>
    </location>
    <ligand>
        <name>Mg(2+)</name>
        <dbReference type="ChEBI" id="CHEBI:18420"/>
    </ligand>
</feature>
<feature type="binding site" evidence="1">
    <location>
        <position position="44"/>
    </location>
    <ligand>
        <name>K(+)</name>
        <dbReference type="ChEBI" id="CHEBI:29103"/>
    </ligand>
</feature>
<feature type="binding site" description="in other chain" evidence="1">
    <location>
        <position position="57"/>
    </location>
    <ligand>
        <name>L-methionine</name>
        <dbReference type="ChEBI" id="CHEBI:57844"/>
        <note>ligand shared between two neighboring subunits</note>
    </ligand>
</feature>
<feature type="binding site" description="in other chain" evidence="1">
    <location>
        <position position="100"/>
    </location>
    <ligand>
        <name>L-methionine</name>
        <dbReference type="ChEBI" id="CHEBI:57844"/>
        <note>ligand shared between two neighboring subunits</note>
    </ligand>
</feature>
<feature type="binding site" description="in other chain" evidence="1">
    <location>
        <begin position="165"/>
        <end position="167"/>
    </location>
    <ligand>
        <name>ATP</name>
        <dbReference type="ChEBI" id="CHEBI:30616"/>
        <note>ligand shared between two neighboring subunits</note>
    </ligand>
</feature>
<feature type="binding site" evidence="1">
    <location>
        <position position="240"/>
    </location>
    <ligand>
        <name>ATP</name>
        <dbReference type="ChEBI" id="CHEBI:30616"/>
        <note>ligand shared between two neighboring subunits</note>
    </ligand>
</feature>
<feature type="binding site" evidence="1">
    <location>
        <position position="240"/>
    </location>
    <ligand>
        <name>L-methionine</name>
        <dbReference type="ChEBI" id="CHEBI:57844"/>
        <note>ligand shared between two neighboring subunits</note>
    </ligand>
</feature>
<feature type="binding site" description="in other chain" evidence="1">
    <location>
        <begin position="246"/>
        <end position="247"/>
    </location>
    <ligand>
        <name>ATP</name>
        <dbReference type="ChEBI" id="CHEBI:30616"/>
        <note>ligand shared between two neighboring subunits</note>
    </ligand>
</feature>
<feature type="binding site" evidence="1">
    <location>
        <position position="263"/>
    </location>
    <ligand>
        <name>ATP</name>
        <dbReference type="ChEBI" id="CHEBI:30616"/>
        <note>ligand shared between two neighboring subunits</note>
    </ligand>
</feature>
<feature type="binding site" evidence="1">
    <location>
        <position position="267"/>
    </location>
    <ligand>
        <name>ATP</name>
        <dbReference type="ChEBI" id="CHEBI:30616"/>
        <note>ligand shared between two neighboring subunits</note>
    </ligand>
</feature>
<feature type="binding site" description="in other chain" evidence="1">
    <location>
        <position position="271"/>
    </location>
    <ligand>
        <name>L-methionine</name>
        <dbReference type="ChEBI" id="CHEBI:57844"/>
        <note>ligand shared between two neighboring subunits</note>
    </ligand>
</feature>
<dbReference type="EC" id="2.5.1.6" evidence="1"/>
<dbReference type="EMBL" id="CP000863">
    <property type="protein sequence ID" value="ACC56876.1"/>
    <property type="molecule type" value="Genomic_DNA"/>
</dbReference>
<dbReference type="RefSeq" id="WP_001209544.1">
    <property type="nucleotide sequence ID" value="NZ_CP031380.1"/>
</dbReference>
<dbReference type="SMR" id="B2HYY9"/>
<dbReference type="GeneID" id="92893747"/>
<dbReference type="KEGG" id="abc:ACICU_01564"/>
<dbReference type="HOGENOM" id="CLU_041802_1_1_6"/>
<dbReference type="UniPathway" id="UPA00315">
    <property type="reaction ID" value="UER00080"/>
</dbReference>
<dbReference type="Proteomes" id="UP000008839">
    <property type="component" value="Chromosome"/>
</dbReference>
<dbReference type="GO" id="GO:0005737">
    <property type="term" value="C:cytoplasm"/>
    <property type="evidence" value="ECO:0007669"/>
    <property type="project" value="UniProtKB-SubCell"/>
</dbReference>
<dbReference type="GO" id="GO:0005524">
    <property type="term" value="F:ATP binding"/>
    <property type="evidence" value="ECO:0007669"/>
    <property type="project" value="UniProtKB-UniRule"/>
</dbReference>
<dbReference type="GO" id="GO:0000287">
    <property type="term" value="F:magnesium ion binding"/>
    <property type="evidence" value="ECO:0007669"/>
    <property type="project" value="UniProtKB-UniRule"/>
</dbReference>
<dbReference type="GO" id="GO:0004478">
    <property type="term" value="F:methionine adenosyltransferase activity"/>
    <property type="evidence" value="ECO:0007669"/>
    <property type="project" value="UniProtKB-UniRule"/>
</dbReference>
<dbReference type="GO" id="GO:0006730">
    <property type="term" value="P:one-carbon metabolic process"/>
    <property type="evidence" value="ECO:0007669"/>
    <property type="project" value="UniProtKB-KW"/>
</dbReference>
<dbReference type="GO" id="GO:0006556">
    <property type="term" value="P:S-adenosylmethionine biosynthetic process"/>
    <property type="evidence" value="ECO:0007669"/>
    <property type="project" value="UniProtKB-UniRule"/>
</dbReference>
<dbReference type="CDD" id="cd18079">
    <property type="entry name" value="S-AdoMet_synt"/>
    <property type="match status" value="1"/>
</dbReference>
<dbReference type="FunFam" id="3.30.300.10:FF:000003">
    <property type="entry name" value="S-adenosylmethionine synthase"/>
    <property type="match status" value="1"/>
</dbReference>
<dbReference type="Gene3D" id="3.30.300.10">
    <property type="match status" value="3"/>
</dbReference>
<dbReference type="HAMAP" id="MF_00086">
    <property type="entry name" value="S_AdoMet_synth1"/>
    <property type="match status" value="1"/>
</dbReference>
<dbReference type="InterPro" id="IPR022631">
    <property type="entry name" value="ADOMET_SYNTHASE_CS"/>
</dbReference>
<dbReference type="InterPro" id="IPR022630">
    <property type="entry name" value="S-AdoMet_synt_C"/>
</dbReference>
<dbReference type="InterPro" id="IPR022629">
    <property type="entry name" value="S-AdoMet_synt_central"/>
</dbReference>
<dbReference type="InterPro" id="IPR022628">
    <property type="entry name" value="S-AdoMet_synt_N"/>
</dbReference>
<dbReference type="InterPro" id="IPR002133">
    <property type="entry name" value="S-AdoMet_synthetase"/>
</dbReference>
<dbReference type="InterPro" id="IPR022636">
    <property type="entry name" value="S-AdoMet_synthetase_sfam"/>
</dbReference>
<dbReference type="NCBIfam" id="TIGR01034">
    <property type="entry name" value="metK"/>
    <property type="match status" value="1"/>
</dbReference>
<dbReference type="PANTHER" id="PTHR11964">
    <property type="entry name" value="S-ADENOSYLMETHIONINE SYNTHETASE"/>
    <property type="match status" value="1"/>
</dbReference>
<dbReference type="Pfam" id="PF02773">
    <property type="entry name" value="S-AdoMet_synt_C"/>
    <property type="match status" value="1"/>
</dbReference>
<dbReference type="Pfam" id="PF02772">
    <property type="entry name" value="S-AdoMet_synt_M"/>
    <property type="match status" value="1"/>
</dbReference>
<dbReference type="Pfam" id="PF00438">
    <property type="entry name" value="S-AdoMet_synt_N"/>
    <property type="match status" value="1"/>
</dbReference>
<dbReference type="PIRSF" id="PIRSF000497">
    <property type="entry name" value="MAT"/>
    <property type="match status" value="1"/>
</dbReference>
<dbReference type="SUPFAM" id="SSF55973">
    <property type="entry name" value="S-adenosylmethionine synthetase"/>
    <property type="match status" value="3"/>
</dbReference>
<dbReference type="PROSITE" id="PS00376">
    <property type="entry name" value="ADOMET_SYNTHASE_1"/>
    <property type="match status" value="1"/>
</dbReference>
<dbReference type="PROSITE" id="PS00377">
    <property type="entry name" value="ADOMET_SYNTHASE_2"/>
    <property type="match status" value="1"/>
</dbReference>
<keyword id="KW-0067">ATP-binding</keyword>
<keyword id="KW-0963">Cytoplasm</keyword>
<keyword id="KW-0460">Magnesium</keyword>
<keyword id="KW-0479">Metal-binding</keyword>
<keyword id="KW-0547">Nucleotide-binding</keyword>
<keyword id="KW-0554">One-carbon metabolism</keyword>
<keyword id="KW-0630">Potassium</keyword>
<keyword id="KW-0808">Transferase</keyword>
<reference key="1">
    <citation type="journal article" date="2008" name="Antimicrob. Agents Chemother.">
        <title>Whole-genome pyrosequencing of an epidemic multidrug-resistant Acinetobacter baumannii strain belonging to the European clone II group.</title>
        <authorList>
            <person name="Iacono M."/>
            <person name="Villa L."/>
            <person name="Fortini D."/>
            <person name="Bordoni R."/>
            <person name="Imperi F."/>
            <person name="Bonnal R.J."/>
            <person name="Sicheritz-Ponten T."/>
            <person name="De Bellis G."/>
            <person name="Visca P."/>
            <person name="Cassone A."/>
            <person name="Carattoli A."/>
        </authorList>
    </citation>
    <scope>NUCLEOTIDE SEQUENCE [LARGE SCALE GENOMIC DNA]</scope>
    <source>
        <strain>ACICU</strain>
    </source>
</reference>
<name>METK_ACIBC</name>
<organism>
    <name type="scientific">Acinetobacter baumannii (strain ACICU)</name>
    <dbReference type="NCBI Taxonomy" id="405416"/>
    <lineage>
        <taxon>Bacteria</taxon>
        <taxon>Pseudomonadati</taxon>
        <taxon>Pseudomonadota</taxon>
        <taxon>Gammaproteobacteria</taxon>
        <taxon>Moraxellales</taxon>
        <taxon>Moraxellaceae</taxon>
        <taxon>Acinetobacter</taxon>
        <taxon>Acinetobacter calcoaceticus/baumannii complex</taxon>
    </lineage>
</organism>
<protein>
    <recommendedName>
        <fullName evidence="1">S-adenosylmethionine synthase</fullName>
        <shortName evidence="1">AdoMet synthase</shortName>
        <ecNumber evidence="1">2.5.1.6</ecNumber>
    </recommendedName>
    <alternativeName>
        <fullName evidence="1">MAT</fullName>
    </alternativeName>
    <alternativeName>
        <fullName evidence="1">Methionine adenosyltransferase</fullName>
    </alternativeName>
</protein>
<proteinExistence type="inferred from homology"/>
<accession>B2HYY9</accession>
<sequence length="388" mass="41975">MREYAVFTSESVSEGHPDKMADQISDAILDAILKEDPYARVACETLVKTGAVVLAGEITTTANIDVEAVVRQTVNGIGYHHSDLGFDGSTCAVINMIGKQSPEIAQGVDRQKPEDQGAGDQGLMFGYASRETDVLMPAPISYAHRLMERQAELRRSGALPWLRPDAKSQVTFAYENGKPVRLDAVVLSTQHDPEITQTQLKEAVIEEIIKPIIPAEMFHAATKFHINPTGMFVIGGPVGDCGLTGRKIIVDTYGGMARHGGGAFSGKDPSKVDRSAAYAGRYVAKNIVAAGLADKCEIQVSYAIGVAEPTSISINTFGTAKVSDELIIQLVREHFDLRPFGITRMLNLIQPMYKQTAAYGHFGREGSDTAFTWEKTDKVEALKDAAGL</sequence>
<evidence type="ECO:0000255" key="1">
    <source>
        <dbReference type="HAMAP-Rule" id="MF_00086"/>
    </source>
</evidence>
<gene>
    <name evidence="1" type="primary">metK</name>
    <name type="ordered locus">ACICU_01564</name>
</gene>